<sequence length="550" mass="61395">MPYTPIDIQKEEADFQKEVAEIKKWWSEPRWRKTKRIYSAEDIAKKRGTLKINHPSSQQADKLFKLLETHDADKTVSFTFGALDPIHVAQMAKYLDSIYVSGWQCSSTASTSNEPSPDLADYPMDTVPNKVEHLWFAQLFHDRKQREERLTLSKEERAKTPYIDFLRPIIADADTGHGGITAIIKLTKMFIERGAAGIHIEDQAPGTKKCGHMAGKVLVPVQEHINRLVAIRASADIFGSNLLAVARTDSEAATLITSTIDHRDHYFIIGATNPEAGDLAALMAEAESKGIYGNELAAIESEWTKKAGLKLFHEAVIDEIKNGNYSNKDALIKKFTDKVNPLSHTSHKEAKKLAKELTGKDIYFNWDVARAREGYYRYQGGTQCAVMRGRAFAPYADLIWMESALPDYAQAKEFADGVKAAVPDQWLAYNLSPSFNWNKAMPADEQETYIKRLGKLGYVWQFITLAGLHTTALAVDDFSNQYSQIGMKAYGQTVQQPEIEKGVEVVKHQKWSGATYIDGLLKMVSGGVTSTAAMGQGVTEDQFKESKAKA</sequence>
<accession>Q9P8Q7</accession>
<feature type="chain" id="PRO_0000068784" description="Isocitrate lyase">
    <location>
        <begin position="1"/>
        <end position="550"/>
    </location>
</feature>
<feature type="short sequence motif" description="Microbody targeting signal" evidence="4">
    <location>
        <begin position="548"/>
        <end position="550"/>
    </location>
</feature>
<feature type="active site" description="Proton acceptor" evidence="3">
    <location>
        <position position="210"/>
    </location>
</feature>
<feature type="binding site" evidence="3">
    <location>
        <begin position="101"/>
        <end position="103"/>
    </location>
    <ligand>
        <name>substrate</name>
    </ligand>
</feature>
<feature type="binding site" evidence="3">
    <location>
        <position position="172"/>
    </location>
    <ligand>
        <name>Mg(2+)</name>
        <dbReference type="ChEBI" id="CHEBI:18420"/>
    </ligand>
</feature>
<feature type="binding site" evidence="3">
    <location>
        <begin position="211"/>
        <end position="212"/>
    </location>
    <ligand>
        <name>substrate</name>
    </ligand>
</feature>
<feature type="binding site" evidence="3">
    <location>
        <position position="247"/>
    </location>
    <ligand>
        <name>substrate</name>
    </ligand>
</feature>
<feature type="binding site" evidence="3">
    <location>
        <begin position="430"/>
        <end position="434"/>
    </location>
    <ligand>
        <name>substrate</name>
    </ligand>
</feature>
<feature type="binding site" evidence="3">
    <location>
        <position position="464"/>
    </location>
    <ligand>
        <name>substrate</name>
    </ligand>
</feature>
<feature type="helix" evidence="8">
    <location>
        <begin position="9"/>
        <end position="25"/>
    </location>
</feature>
<feature type="helix" evidence="8">
    <location>
        <begin position="29"/>
        <end position="31"/>
    </location>
</feature>
<feature type="helix" evidence="8">
    <location>
        <begin position="40"/>
        <end position="46"/>
    </location>
</feature>
<feature type="helix" evidence="8">
    <location>
        <begin position="55"/>
        <end position="73"/>
    </location>
</feature>
<feature type="strand" evidence="7">
    <location>
        <begin position="77"/>
        <end position="81"/>
    </location>
</feature>
<feature type="turn" evidence="8">
    <location>
        <begin position="90"/>
        <end position="93"/>
    </location>
</feature>
<feature type="strand" evidence="8">
    <location>
        <begin position="98"/>
        <end position="100"/>
    </location>
</feature>
<feature type="helix" evidence="7">
    <location>
        <begin position="102"/>
        <end position="108"/>
    </location>
</feature>
<feature type="strand" evidence="7">
    <location>
        <begin position="117"/>
        <end position="120"/>
    </location>
</feature>
<feature type="helix" evidence="8">
    <location>
        <begin position="127"/>
        <end position="150"/>
    </location>
</feature>
<feature type="helix" evidence="8">
    <location>
        <begin position="156"/>
        <end position="159"/>
    </location>
</feature>
<feature type="strand" evidence="8">
    <location>
        <begin position="169"/>
        <end position="172"/>
    </location>
</feature>
<feature type="strand" evidence="7">
    <location>
        <begin position="177"/>
        <end position="179"/>
    </location>
</feature>
<feature type="helix" evidence="8">
    <location>
        <begin position="181"/>
        <end position="192"/>
    </location>
</feature>
<feature type="strand" evidence="8">
    <location>
        <begin position="196"/>
        <end position="203"/>
    </location>
</feature>
<feature type="strand" evidence="8">
    <location>
        <begin position="216"/>
        <end position="218"/>
    </location>
</feature>
<feature type="helix" evidence="8">
    <location>
        <begin position="221"/>
        <end position="238"/>
    </location>
</feature>
<feature type="strand" evidence="8">
    <location>
        <begin position="243"/>
        <end position="248"/>
    </location>
</feature>
<feature type="turn" evidence="8">
    <location>
        <begin position="250"/>
        <end position="252"/>
    </location>
</feature>
<feature type="strand" evidence="8">
    <location>
        <begin position="253"/>
        <end position="257"/>
    </location>
</feature>
<feature type="helix" evidence="8">
    <location>
        <begin position="262"/>
        <end position="265"/>
    </location>
</feature>
<feature type="helix" evidence="8">
    <location>
        <begin position="279"/>
        <end position="285"/>
    </location>
</feature>
<feature type="turn" evidence="7">
    <location>
        <begin position="288"/>
        <end position="290"/>
    </location>
</feature>
<feature type="helix" evidence="8">
    <location>
        <begin position="293"/>
        <end position="306"/>
    </location>
</feature>
<feature type="helix" evidence="8">
    <location>
        <begin position="312"/>
        <end position="320"/>
    </location>
</feature>
<feature type="helix" evidence="8">
    <location>
        <begin position="329"/>
        <end position="338"/>
    </location>
</feature>
<feature type="helix" evidence="8">
    <location>
        <begin position="347"/>
        <end position="357"/>
    </location>
</feature>
<feature type="strand" evidence="8">
    <location>
        <begin position="365"/>
        <end position="367"/>
    </location>
</feature>
<feature type="strand" evidence="8">
    <location>
        <begin position="376"/>
        <end position="378"/>
    </location>
</feature>
<feature type="helix" evidence="8">
    <location>
        <begin position="381"/>
        <end position="392"/>
    </location>
</feature>
<feature type="helix" evidence="8">
    <location>
        <begin position="393"/>
        <end position="395"/>
    </location>
</feature>
<feature type="strand" evidence="8">
    <location>
        <begin position="397"/>
        <end position="405"/>
    </location>
</feature>
<feature type="helix" evidence="8">
    <location>
        <begin position="408"/>
        <end position="421"/>
    </location>
</feature>
<feature type="strand" evidence="8">
    <location>
        <begin position="426"/>
        <end position="431"/>
    </location>
</feature>
<feature type="helix" evidence="7">
    <location>
        <begin position="437"/>
        <end position="440"/>
    </location>
</feature>
<feature type="helix" evidence="8">
    <location>
        <begin position="446"/>
        <end position="456"/>
    </location>
</feature>
<feature type="strand" evidence="8">
    <location>
        <begin position="458"/>
        <end position="461"/>
    </location>
</feature>
<feature type="helix" evidence="7">
    <location>
        <begin position="466"/>
        <end position="485"/>
    </location>
</feature>
<feature type="helix" evidence="7">
    <location>
        <begin position="488"/>
        <end position="493"/>
    </location>
</feature>
<feature type="helix" evidence="7">
    <location>
        <begin position="495"/>
        <end position="500"/>
    </location>
</feature>
<feature type="helix" evidence="7">
    <location>
        <begin position="504"/>
        <end position="506"/>
    </location>
</feature>
<feature type="helix" evidence="7">
    <location>
        <begin position="508"/>
        <end position="512"/>
    </location>
</feature>
<feature type="helix" evidence="7">
    <location>
        <begin position="514"/>
        <end position="524"/>
    </location>
</feature>
<feature type="turn" evidence="7">
    <location>
        <begin position="525"/>
        <end position="527"/>
    </location>
</feature>
<feature type="helix" evidence="7">
    <location>
        <begin position="541"/>
        <end position="543"/>
    </location>
</feature>
<organism>
    <name type="scientific">Candida albicans</name>
    <name type="common">Yeast</name>
    <dbReference type="NCBI Taxonomy" id="5476"/>
    <lineage>
        <taxon>Eukaryota</taxon>
        <taxon>Fungi</taxon>
        <taxon>Dikarya</taxon>
        <taxon>Ascomycota</taxon>
        <taxon>Saccharomycotina</taxon>
        <taxon>Pichiomycetes</taxon>
        <taxon>Debaryomycetaceae</taxon>
        <taxon>Candida/Lodderomyces clade</taxon>
        <taxon>Candida</taxon>
    </lineage>
</organism>
<comment type="function">
    <text evidence="1">Catalyzes the formation of succinate and glyoxylate from isocitrate, a key step of the glyoxylate cycle, which operates as an anaplerotic route for replenishing the tricarboxylic acid cycle. Required for growth on ethanol or acetate, but dispensable when fermentable carbon sources are available. Also acts on 2-methylisocitrate.</text>
</comment>
<comment type="catalytic activity">
    <reaction evidence="1">
        <text>D-threo-isocitrate = glyoxylate + succinate</text>
        <dbReference type="Rhea" id="RHEA:13245"/>
        <dbReference type="ChEBI" id="CHEBI:15562"/>
        <dbReference type="ChEBI" id="CHEBI:30031"/>
        <dbReference type="ChEBI" id="CHEBI:36655"/>
        <dbReference type="EC" id="4.1.3.1"/>
    </reaction>
</comment>
<comment type="catalytic activity">
    <reaction evidence="1">
        <text>(2S,3R)-3-hydroxybutane-1,2,3-tricarboxylate = pyruvate + succinate</text>
        <dbReference type="Rhea" id="RHEA:16809"/>
        <dbReference type="ChEBI" id="CHEBI:15361"/>
        <dbReference type="ChEBI" id="CHEBI:30031"/>
        <dbReference type="ChEBI" id="CHEBI:57429"/>
        <dbReference type="EC" id="4.1.3.30"/>
    </reaction>
</comment>
<comment type="cofactor">
    <cofactor evidence="3">
        <name>Mg(2+)</name>
        <dbReference type="ChEBI" id="CHEBI:18420"/>
    </cofactor>
</comment>
<comment type="pathway">
    <text>Carbohydrate metabolism; glyoxylate cycle; (S)-malate from isocitrate: step 1/2.</text>
</comment>
<comment type="subunit">
    <text evidence="1">Homotetramer.</text>
</comment>
<comment type="subcellular location">
    <subcellularLocation>
        <location evidence="2">Glyoxysome</location>
    </subcellularLocation>
</comment>
<comment type="similarity">
    <text evidence="6">Belongs to the isocitrate lyase/PEP mutase superfamily. Isocitrate lyase family.</text>
</comment>
<protein>
    <recommendedName>
        <fullName evidence="5">Isocitrate lyase</fullName>
        <shortName evidence="6">ICL</shortName>
        <shortName evidence="6">Isocitrase</shortName>
        <shortName evidence="6">Isocitratase</shortName>
        <ecNumber evidence="1">4.1.3.1</ecNumber>
    </recommendedName>
    <alternativeName>
        <fullName evidence="1">Methylisocitrate lyase</fullName>
        <shortName evidence="6">MICA</shortName>
        <ecNumber evidence="1">4.1.3.30</ecNumber>
    </alternativeName>
    <alternativeName>
        <fullName evidence="6">Threo-D(S)-isocitrate glyoxylate-lyase</fullName>
    </alternativeName>
</protein>
<proteinExistence type="evidence at protein level"/>
<evidence type="ECO:0000250" key="1">
    <source>
        <dbReference type="UniProtKB" id="P28240"/>
    </source>
</evidence>
<evidence type="ECO:0000250" key="2">
    <source>
        <dbReference type="UniProtKB" id="P28299"/>
    </source>
</evidence>
<evidence type="ECO:0000250" key="3">
    <source>
        <dbReference type="UniProtKB" id="P9WKK7"/>
    </source>
</evidence>
<evidence type="ECO:0000255" key="4"/>
<evidence type="ECO:0000303" key="5">
    <source>
    </source>
</evidence>
<evidence type="ECO:0000305" key="6"/>
<evidence type="ECO:0007829" key="7">
    <source>
        <dbReference type="PDB" id="7EBE"/>
    </source>
</evidence>
<evidence type="ECO:0007829" key="8">
    <source>
        <dbReference type="PDB" id="7EBF"/>
    </source>
</evidence>
<dbReference type="EC" id="4.1.3.1" evidence="1"/>
<dbReference type="EC" id="4.1.3.30" evidence="1"/>
<dbReference type="EMBL" id="AF222905">
    <property type="protein sequence ID" value="AAF34690.1"/>
    <property type="molecule type" value="Genomic_DNA"/>
</dbReference>
<dbReference type="PDB" id="7EBE">
    <property type="method" value="X-ray"/>
    <property type="resolution" value="2.69 A"/>
    <property type="chains" value="A/B/C/D/E/F/G/H=1-550"/>
</dbReference>
<dbReference type="PDB" id="7EBF">
    <property type="method" value="EM"/>
    <property type="resolution" value="2.63 A"/>
    <property type="chains" value="A/B/C/D=1-550"/>
</dbReference>
<dbReference type="PDBsum" id="7EBE"/>
<dbReference type="PDBsum" id="7EBF"/>
<dbReference type="SMR" id="Q9P8Q7"/>
<dbReference type="BindingDB" id="Q9P8Q7"/>
<dbReference type="ChEMBL" id="CHEMBL5359"/>
<dbReference type="VEuPathDB" id="FungiDB:C1_04500W_A"/>
<dbReference type="VEuPathDB" id="FungiDB:CAWG_00944"/>
<dbReference type="BRENDA" id="4.1.3.1">
    <property type="organism ID" value="1096"/>
</dbReference>
<dbReference type="UniPathway" id="UPA00703">
    <property type="reaction ID" value="UER00719"/>
</dbReference>
<dbReference type="PHI-base" id="PHI:6192"/>
<dbReference type="GO" id="GO:0009514">
    <property type="term" value="C:glyoxysome"/>
    <property type="evidence" value="ECO:0007669"/>
    <property type="project" value="UniProtKB-SubCell"/>
</dbReference>
<dbReference type="GO" id="GO:0004451">
    <property type="term" value="F:isocitrate lyase activity"/>
    <property type="evidence" value="ECO:0007669"/>
    <property type="project" value="UniProtKB-EC"/>
</dbReference>
<dbReference type="GO" id="GO:0046872">
    <property type="term" value="F:metal ion binding"/>
    <property type="evidence" value="ECO:0007669"/>
    <property type="project" value="UniProtKB-KW"/>
</dbReference>
<dbReference type="GO" id="GO:0046421">
    <property type="term" value="F:methylisocitrate lyase activity"/>
    <property type="evidence" value="ECO:0007669"/>
    <property type="project" value="UniProtKB-EC"/>
</dbReference>
<dbReference type="GO" id="GO:0006097">
    <property type="term" value="P:glyoxylate cycle"/>
    <property type="evidence" value="ECO:0007669"/>
    <property type="project" value="UniProtKB-UniPathway"/>
</dbReference>
<dbReference type="GO" id="GO:0006099">
    <property type="term" value="P:tricarboxylic acid cycle"/>
    <property type="evidence" value="ECO:0007669"/>
    <property type="project" value="UniProtKB-KW"/>
</dbReference>
<dbReference type="CDD" id="cd00377">
    <property type="entry name" value="ICL_PEPM"/>
    <property type="match status" value="1"/>
</dbReference>
<dbReference type="FunFam" id="1.10.10.850:FF:000001">
    <property type="entry name" value="Isocitrate lyase"/>
    <property type="match status" value="1"/>
</dbReference>
<dbReference type="Gene3D" id="1.10.10.850">
    <property type="match status" value="1"/>
</dbReference>
<dbReference type="Gene3D" id="3.20.20.60">
    <property type="entry name" value="Phosphoenolpyruvate-binding domains"/>
    <property type="match status" value="1"/>
</dbReference>
<dbReference type="InterPro" id="IPR039556">
    <property type="entry name" value="ICL/PEPM"/>
</dbReference>
<dbReference type="InterPro" id="IPR006254">
    <property type="entry name" value="Isocitrate_lyase"/>
</dbReference>
<dbReference type="InterPro" id="IPR018523">
    <property type="entry name" value="Isocitrate_lyase_ph_CS"/>
</dbReference>
<dbReference type="InterPro" id="IPR015813">
    <property type="entry name" value="Pyrv/PenolPyrv_kinase-like_dom"/>
</dbReference>
<dbReference type="InterPro" id="IPR040442">
    <property type="entry name" value="Pyrv_kinase-like_dom_sf"/>
</dbReference>
<dbReference type="NCBIfam" id="TIGR01346">
    <property type="entry name" value="isocit_lyase"/>
    <property type="match status" value="1"/>
</dbReference>
<dbReference type="PANTHER" id="PTHR21631:SF3">
    <property type="entry name" value="BIFUNCTIONAL GLYOXYLATE CYCLE PROTEIN"/>
    <property type="match status" value="1"/>
</dbReference>
<dbReference type="PANTHER" id="PTHR21631">
    <property type="entry name" value="ISOCITRATE LYASE/MALATE SYNTHASE"/>
    <property type="match status" value="1"/>
</dbReference>
<dbReference type="Pfam" id="PF00463">
    <property type="entry name" value="ICL"/>
    <property type="match status" value="1"/>
</dbReference>
<dbReference type="PIRSF" id="PIRSF001362">
    <property type="entry name" value="Isocit_lyase"/>
    <property type="match status" value="1"/>
</dbReference>
<dbReference type="SUPFAM" id="SSF51621">
    <property type="entry name" value="Phosphoenolpyruvate/pyruvate domain"/>
    <property type="match status" value="1"/>
</dbReference>
<dbReference type="PROSITE" id="PS00161">
    <property type="entry name" value="ISOCITRATE_LYASE"/>
    <property type="match status" value="1"/>
</dbReference>
<gene>
    <name evidence="5" type="primary">ICL1</name>
</gene>
<reference key="1">
    <citation type="journal article" date="2002" name="FEMS Yeast Res.">
        <title>Gluconeogenesis in Candida albicans.</title>
        <authorList>
            <person name="Eschrich D."/>
            <person name="Koetter P."/>
            <person name="Entian K.-D."/>
        </authorList>
    </citation>
    <scope>NUCLEOTIDE SEQUENCE [GENOMIC DNA]</scope>
</reference>
<name>ACEA_CANAX</name>
<keyword id="KW-0002">3D-structure</keyword>
<keyword id="KW-0329">Glyoxylate bypass</keyword>
<keyword id="KW-0330">Glyoxysome</keyword>
<keyword id="KW-0456">Lyase</keyword>
<keyword id="KW-0460">Magnesium</keyword>
<keyword id="KW-0479">Metal-binding</keyword>
<keyword id="KW-0576">Peroxisome</keyword>
<keyword id="KW-0816">Tricarboxylic acid cycle</keyword>